<dbReference type="EMBL" id="CP001087">
    <property type="protein sequence ID" value="ACN14819.1"/>
    <property type="molecule type" value="Genomic_DNA"/>
</dbReference>
<dbReference type="RefSeq" id="WP_015903606.1">
    <property type="nucleotide sequence ID" value="NC_012108.1"/>
</dbReference>
<dbReference type="SMR" id="C0QB20"/>
<dbReference type="STRING" id="177437.HRM2_17130"/>
<dbReference type="KEGG" id="dat:HRM2_17130"/>
<dbReference type="eggNOG" id="COG0233">
    <property type="taxonomic scope" value="Bacteria"/>
</dbReference>
<dbReference type="HOGENOM" id="CLU_073981_2_0_7"/>
<dbReference type="OrthoDB" id="9804006at2"/>
<dbReference type="Proteomes" id="UP000000442">
    <property type="component" value="Chromosome"/>
</dbReference>
<dbReference type="GO" id="GO:0005829">
    <property type="term" value="C:cytosol"/>
    <property type="evidence" value="ECO:0007669"/>
    <property type="project" value="GOC"/>
</dbReference>
<dbReference type="GO" id="GO:0043023">
    <property type="term" value="F:ribosomal large subunit binding"/>
    <property type="evidence" value="ECO:0007669"/>
    <property type="project" value="TreeGrafter"/>
</dbReference>
<dbReference type="GO" id="GO:0002184">
    <property type="term" value="P:cytoplasmic translational termination"/>
    <property type="evidence" value="ECO:0007669"/>
    <property type="project" value="TreeGrafter"/>
</dbReference>
<dbReference type="CDD" id="cd00520">
    <property type="entry name" value="RRF"/>
    <property type="match status" value="1"/>
</dbReference>
<dbReference type="FunFam" id="1.10.132.20:FF:000001">
    <property type="entry name" value="Ribosome-recycling factor"/>
    <property type="match status" value="1"/>
</dbReference>
<dbReference type="FunFam" id="3.30.1360.40:FF:000001">
    <property type="entry name" value="Ribosome-recycling factor"/>
    <property type="match status" value="1"/>
</dbReference>
<dbReference type="Gene3D" id="3.30.1360.40">
    <property type="match status" value="1"/>
</dbReference>
<dbReference type="Gene3D" id="1.10.132.20">
    <property type="entry name" value="Ribosome-recycling factor"/>
    <property type="match status" value="1"/>
</dbReference>
<dbReference type="HAMAP" id="MF_00040">
    <property type="entry name" value="RRF"/>
    <property type="match status" value="1"/>
</dbReference>
<dbReference type="InterPro" id="IPR002661">
    <property type="entry name" value="Ribosome_recyc_fac"/>
</dbReference>
<dbReference type="InterPro" id="IPR023584">
    <property type="entry name" value="Ribosome_recyc_fac_dom"/>
</dbReference>
<dbReference type="InterPro" id="IPR036191">
    <property type="entry name" value="RRF_sf"/>
</dbReference>
<dbReference type="NCBIfam" id="TIGR00496">
    <property type="entry name" value="frr"/>
    <property type="match status" value="1"/>
</dbReference>
<dbReference type="PANTHER" id="PTHR20982:SF3">
    <property type="entry name" value="MITOCHONDRIAL RIBOSOME RECYCLING FACTOR PSEUDO 1"/>
    <property type="match status" value="1"/>
</dbReference>
<dbReference type="PANTHER" id="PTHR20982">
    <property type="entry name" value="RIBOSOME RECYCLING FACTOR"/>
    <property type="match status" value="1"/>
</dbReference>
<dbReference type="Pfam" id="PF01765">
    <property type="entry name" value="RRF"/>
    <property type="match status" value="1"/>
</dbReference>
<dbReference type="SUPFAM" id="SSF55194">
    <property type="entry name" value="Ribosome recycling factor, RRF"/>
    <property type="match status" value="1"/>
</dbReference>
<feature type="chain" id="PRO_1000202094" description="Ribosome-recycling factor">
    <location>
        <begin position="1"/>
        <end position="185"/>
    </location>
</feature>
<evidence type="ECO:0000255" key="1">
    <source>
        <dbReference type="HAMAP-Rule" id="MF_00040"/>
    </source>
</evidence>
<gene>
    <name evidence="1" type="primary">frr</name>
    <name type="ordered locus">HRM2_17130</name>
</gene>
<protein>
    <recommendedName>
        <fullName evidence="1">Ribosome-recycling factor</fullName>
        <shortName evidence="1">RRF</shortName>
    </recommendedName>
    <alternativeName>
        <fullName evidence="1">Ribosome-releasing factor</fullName>
    </alternativeName>
</protein>
<comment type="function">
    <text evidence="1">Responsible for the release of ribosomes from messenger RNA at the termination of protein biosynthesis. May increase the efficiency of translation by recycling ribosomes from one round of translation to another.</text>
</comment>
<comment type="subcellular location">
    <subcellularLocation>
        <location evidence="1">Cytoplasm</location>
    </subcellularLocation>
</comment>
<comment type="similarity">
    <text evidence="1">Belongs to the RRF family.</text>
</comment>
<sequence>MINELYKETRDRMVKSVKTLEKEMTRVRTGRASMTMLDGVKVDYYGTLTPLNQMASIAIPESRMITVQPWDISAIKEVEKGILKANIGLTPSSDGKIIRITIPPLTEDRRREIAKTVHNTCEEFKVAVRNIRRDSNDTLKSLQKDGDISEDENFKAQKEVQDITDEFIKQIEAVFAAKEKEILEL</sequence>
<keyword id="KW-0963">Cytoplasm</keyword>
<keyword id="KW-0648">Protein biosynthesis</keyword>
<keyword id="KW-1185">Reference proteome</keyword>
<reference key="1">
    <citation type="journal article" date="2009" name="Environ. Microbiol.">
        <title>Genome sequence of Desulfobacterium autotrophicum HRM2, a marine sulfate reducer oxidizing organic carbon completely to carbon dioxide.</title>
        <authorList>
            <person name="Strittmatter A.W."/>
            <person name="Liesegang H."/>
            <person name="Rabus R."/>
            <person name="Decker I."/>
            <person name="Amann J."/>
            <person name="Andres S."/>
            <person name="Henne A."/>
            <person name="Fricke W.F."/>
            <person name="Martinez-Arias R."/>
            <person name="Bartels D."/>
            <person name="Goesmann A."/>
            <person name="Krause L."/>
            <person name="Puehler A."/>
            <person name="Klenk H.P."/>
            <person name="Richter M."/>
            <person name="Schuler M."/>
            <person name="Gloeckner F.O."/>
            <person name="Meyerdierks A."/>
            <person name="Gottschalk G."/>
            <person name="Amann R."/>
        </authorList>
    </citation>
    <scope>NUCLEOTIDE SEQUENCE [LARGE SCALE GENOMIC DNA]</scope>
    <source>
        <strain>ATCC 43914 / DSM 3382 / VKM B-1955 / HRM2</strain>
    </source>
</reference>
<name>RRF_DESAH</name>
<proteinExistence type="inferred from homology"/>
<accession>C0QB20</accession>
<organism>
    <name type="scientific">Desulforapulum autotrophicum (strain ATCC 43914 / DSM 3382 / VKM B-1955 / HRM2)</name>
    <name type="common">Desulfobacterium autotrophicum</name>
    <dbReference type="NCBI Taxonomy" id="177437"/>
    <lineage>
        <taxon>Bacteria</taxon>
        <taxon>Pseudomonadati</taxon>
        <taxon>Thermodesulfobacteriota</taxon>
        <taxon>Desulfobacteria</taxon>
        <taxon>Desulfobacterales</taxon>
        <taxon>Desulfobacteraceae</taxon>
        <taxon>Desulforapulum</taxon>
    </lineage>
</organism>